<organism>
    <name type="scientific">Thermotoga sp. (strain RQ2)</name>
    <dbReference type="NCBI Taxonomy" id="126740"/>
    <lineage>
        <taxon>Bacteria</taxon>
        <taxon>Thermotogati</taxon>
        <taxon>Thermotogota</taxon>
        <taxon>Thermotogae</taxon>
        <taxon>Thermotogales</taxon>
        <taxon>Thermotogaceae</taxon>
        <taxon>Thermotoga</taxon>
    </lineage>
</organism>
<reference key="1">
    <citation type="journal article" date="2011" name="J. Bacteriol.">
        <title>Genome sequence of Thermotoga sp. strain RQ2, a hyperthermophilic bacterium isolated from a geothermally heated region of the seafloor near Ribeira Quente, the Azores.</title>
        <authorList>
            <person name="Swithers K.S."/>
            <person name="DiPippo J.L."/>
            <person name="Bruce D.C."/>
            <person name="Detter C."/>
            <person name="Tapia R."/>
            <person name="Han S."/>
            <person name="Saunders E."/>
            <person name="Goodwin L.A."/>
            <person name="Han J."/>
            <person name="Woyke T."/>
            <person name="Pitluck S."/>
            <person name="Pennacchio L."/>
            <person name="Nolan M."/>
            <person name="Mikhailova N."/>
            <person name="Lykidis A."/>
            <person name="Land M.L."/>
            <person name="Brettin T."/>
            <person name="Stetter K.O."/>
            <person name="Nelson K.E."/>
            <person name="Gogarten J.P."/>
            <person name="Noll K.M."/>
        </authorList>
    </citation>
    <scope>NUCLEOTIDE SEQUENCE [LARGE SCALE GENOMIC DNA]</scope>
    <source>
        <strain>RQ2</strain>
    </source>
</reference>
<name>SFSA_THESQ</name>
<proteinExistence type="inferred from homology"/>
<protein>
    <recommendedName>
        <fullName evidence="1">Sugar fermentation stimulation protein homolog</fullName>
    </recommendedName>
</protein>
<feature type="chain" id="PRO_1000093598" description="Sugar fermentation stimulation protein homolog">
    <location>
        <begin position="1"/>
        <end position="222"/>
    </location>
</feature>
<accession>B1L8S9</accession>
<comment type="similarity">
    <text evidence="1">Belongs to the SfsA family.</text>
</comment>
<gene>
    <name evidence="1" type="primary">sfsA</name>
    <name type="ordered locus">TRQ2_0371</name>
</gene>
<dbReference type="EMBL" id="CP000969">
    <property type="protein sequence ID" value="ACB08727.1"/>
    <property type="molecule type" value="Genomic_DNA"/>
</dbReference>
<dbReference type="RefSeq" id="WP_012310502.1">
    <property type="nucleotide sequence ID" value="NC_010483.1"/>
</dbReference>
<dbReference type="SMR" id="B1L8S9"/>
<dbReference type="KEGG" id="trq:TRQ2_0371"/>
<dbReference type="HOGENOM" id="CLU_052299_1_0_0"/>
<dbReference type="Proteomes" id="UP000001687">
    <property type="component" value="Chromosome"/>
</dbReference>
<dbReference type="GO" id="GO:0003677">
    <property type="term" value="F:DNA binding"/>
    <property type="evidence" value="ECO:0007669"/>
    <property type="project" value="InterPro"/>
</dbReference>
<dbReference type="CDD" id="cd22357">
    <property type="entry name" value="SfsA-like"/>
    <property type="match status" value="1"/>
</dbReference>
<dbReference type="FunFam" id="2.40.50.580:FF:000002">
    <property type="entry name" value="Sugar fermentation stimulation protein homolog"/>
    <property type="match status" value="1"/>
</dbReference>
<dbReference type="Gene3D" id="2.40.50.580">
    <property type="match status" value="1"/>
</dbReference>
<dbReference type="Gene3D" id="3.40.1350.60">
    <property type="match status" value="1"/>
</dbReference>
<dbReference type="HAMAP" id="MF_00095">
    <property type="entry name" value="SfsA"/>
    <property type="match status" value="1"/>
</dbReference>
<dbReference type="InterPro" id="IPR005224">
    <property type="entry name" value="SfsA"/>
</dbReference>
<dbReference type="InterPro" id="IPR040452">
    <property type="entry name" value="SfsA_C"/>
</dbReference>
<dbReference type="InterPro" id="IPR041465">
    <property type="entry name" value="SfsA_N"/>
</dbReference>
<dbReference type="NCBIfam" id="TIGR00230">
    <property type="entry name" value="sfsA"/>
    <property type="match status" value="1"/>
</dbReference>
<dbReference type="PANTHER" id="PTHR30545">
    <property type="entry name" value="SUGAR FERMENTATION STIMULATION PROTEIN A"/>
    <property type="match status" value="1"/>
</dbReference>
<dbReference type="PANTHER" id="PTHR30545:SF2">
    <property type="entry name" value="SUGAR FERMENTATION STIMULATION PROTEIN A"/>
    <property type="match status" value="1"/>
</dbReference>
<dbReference type="Pfam" id="PF03749">
    <property type="entry name" value="SfsA"/>
    <property type="match status" value="1"/>
</dbReference>
<dbReference type="Pfam" id="PF17746">
    <property type="entry name" value="SfsA_N"/>
    <property type="match status" value="1"/>
</dbReference>
<sequence>MRLILPADTEGIFLERKSRFTGVALVEGKKTLIHIHNTGRLPLLKKGKRVLLKRAESDRRKTGWDLLAVEHRDEFVFVHSGFHSIVAGKILEELFPGSTIESEKRFENSRFDFLIDRRTFVEVKGCTYEEDGVAMFPDAPTERGRRHIEELISSVKSGFKALLLILVFLESDCFLPNRSVDPAFSRVFWRALKSGVNIDVFRVKYDGEYLCSTEKLSICEEV</sequence>
<evidence type="ECO:0000255" key="1">
    <source>
        <dbReference type="HAMAP-Rule" id="MF_00095"/>
    </source>
</evidence>